<gene>
    <name type="primary">MFSD11</name>
</gene>
<keyword id="KW-0025">Alternative splicing</keyword>
<keyword id="KW-0325">Glycoprotein</keyword>
<keyword id="KW-0472">Membrane</keyword>
<keyword id="KW-0597">Phosphoprotein</keyword>
<keyword id="KW-1185">Reference proteome</keyword>
<keyword id="KW-0812">Transmembrane</keyword>
<keyword id="KW-1133">Transmembrane helix</keyword>
<comment type="subcellular location">
    <subcellularLocation>
        <location evidence="4">Membrane</location>
        <topology evidence="4">Multi-pass membrane protein</topology>
    </subcellularLocation>
</comment>
<comment type="alternative products">
    <event type="alternative splicing"/>
    <isoform>
        <id>Q5RCQ5-1</id>
        <name>1</name>
        <sequence type="displayed"/>
    </isoform>
    <isoform>
        <id>Q5RCQ5-2</id>
        <name>2</name>
        <sequence type="described" ref="VSP_028190"/>
    </isoform>
</comment>
<comment type="similarity">
    <text evidence="4">Belongs to the unc-93 family.</text>
</comment>
<comment type="caution">
    <text evidence="4">Despite its name it is related to the unc-93 family and not to the major facilitator superfamily.</text>
</comment>
<evidence type="ECO:0000250" key="1">
    <source>
        <dbReference type="UniProtKB" id="Q8BJ51"/>
    </source>
</evidence>
<evidence type="ECO:0000255" key="2"/>
<evidence type="ECO:0000303" key="3">
    <source ref="1"/>
</evidence>
<evidence type="ECO:0000305" key="4"/>
<organism>
    <name type="scientific">Pongo abelii</name>
    <name type="common">Sumatran orangutan</name>
    <name type="synonym">Pongo pygmaeus abelii</name>
    <dbReference type="NCBI Taxonomy" id="9601"/>
    <lineage>
        <taxon>Eukaryota</taxon>
        <taxon>Metazoa</taxon>
        <taxon>Chordata</taxon>
        <taxon>Craniata</taxon>
        <taxon>Vertebrata</taxon>
        <taxon>Euteleostomi</taxon>
        <taxon>Mammalia</taxon>
        <taxon>Eutheria</taxon>
        <taxon>Euarchontoglires</taxon>
        <taxon>Primates</taxon>
        <taxon>Haplorrhini</taxon>
        <taxon>Catarrhini</taxon>
        <taxon>Hominidae</taxon>
        <taxon>Pongo</taxon>
    </lineage>
</organism>
<accession>Q5RCQ5</accession>
<accession>Q5RE53</accession>
<name>MFS11_PONAB</name>
<dbReference type="EMBL" id="CR857684">
    <property type="protein sequence ID" value="CAH89954.1"/>
    <property type="molecule type" value="mRNA"/>
</dbReference>
<dbReference type="EMBL" id="CR858214">
    <property type="protein sequence ID" value="CAH90452.1"/>
    <property type="molecule type" value="mRNA"/>
</dbReference>
<dbReference type="RefSeq" id="NP_001125232.1">
    <molecule id="Q5RCQ5-1"/>
    <property type="nucleotide sequence ID" value="NM_001131760.1"/>
</dbReference>
<dbReference type="RefSeq" id="XP_054391104.2">
    <molecule id="Q5RCQ5-2"/>
    <property type="nucleotide sequence ID" value="XM_054535129.2"/>
</dbReference>
<dbReference type="SMR" id="Q5RCQ5"/>
<dbReference type="FunCoup" id="Q5RCQ5">
    <property type="interactions" value="59"/>
</dbReference>
<dbReference type="STRING" id="9601.ENSPPYP00000009737"/>
<dbReference type="GlyCosmos" id="Q5RCQ5">
    <property type="glycosylation" value="1 site, No reported glycans"/>
</dbReference>
<dbReference type="GeneID" id="100172125"/>
<dbReference type="KEGG" id="pon:100172125"/>
<dbReference type="CTD" id="79157"/>
<dbReference type="eggNOG" id="KOG3098">
    <property type="taxonomic scope" value="Eukaryota"/>
</dbReference>
<dbReference type="InParanoid" id="Q5RCQ5"/>
<dbReference type="OrthoDB" id="196103at2759"/>
<dbReference type="Proteomes" id="UP000001595">
    <property type="component" value="Unplaced"/>
</dbReference>
<dbReference type="GO" id="GO:0016020">
    <property type="term" value="C:membrane"/>
    <property type="evidence" value="ECO:0007669"/>
    <property type="project" value="UniProtKB-SubCell"/>
</dbReference>
<dbReference type="CDD" id="cd17407">
    <property type="entry name" value="MFS_MFSD11"/>
    <property type="match status" value="1"/>
</dbReference>
<dbReference type="Gene3D" id="1.20.1250.20">
    <property type="entry name" value="MFS general substrate transporter like domains"/>
    <property type="match status" value="1"/>
</dbReference>
<dbReference type="InterPro" id="IPR010291">
    <property type="entry name" value="Ion_channel_UNC-93"/>
</dbReference>
<dbReference type="InterPro" id="IPR036259">
    <property type="entry name" value="MFS_trans_sf"/>
</dbReference>
<dbReference type="InterPro" id="IPR051617">
    <property type="entry name" value="UNC-93-like_regulator"/>
</dbReference>
<dbReference type="PANTHER" id="PTHR23294">
    <property type="entry name" value="ET TRANSLATION PRODUCT-RELATED"/>
    <property type="match status" value="1"/>
</dbReference>
<dbReference type="PANTHER" id="PTHR23294:SF0">
    <property type="entry name" value="UNC93-LIKE PROTEIN MFSD11"/>
    <property type="match status" value="1"/>
</dbReference>
<dbReference type="Pfam" id="PF05978">
    <property type="entry name" value="UNC-93"/>
    <property type="match status" value="1"/>
</dbReference>
<dbReference type="SUPFAM" id="SSF103473">
    <property type="entry name" value="MFS general substrate transporter"/>
    <property type="match status" value="1"/>
</dbReference>
<sequence length="449" mass="49156">MSPESKKLFNIIILGVAFMFMFTAFQTCGNVAQTVIRSLNSTDFHGSGYTSMAIIYGVFSASNLITPPVVAIVGPQLSMFASGLFYSMYIAVFNQPFPWSFYTASVFIGIAAAVLWTAQGNCLTINSDEHTIGRNSGIFWALLQSSLFFGNLYVYFAWQGKTQISESDRRTVFIALTVISLVGTVLFFLIRKPDSENVLGEDESSDDQDMEVNESAQNNLTKAVDAFKKSFKLCVTKEMLLLSITTAYTGLELTFFSGVYGTCIGAINKFGAEEKSLIGLSGIFIGIGEILGGSLFGLLSKNNRFGRNPVVLLGILVHFIAFYLIFLNMPGDAPIAPVKGTDSSAYIKSSKEVAILCSFLLGLGDSCFNTQLLSILGFLYSEDSAPAFAIFKFVQSICAAVAFFYSNYLLLHWQLLVMVIFGFFGTLSFFTVEWEAAAFVARGSDYRSI</sequence>
<feature type="chain" id="PRO_0000305022" description="UNC93-like protein MFSD11">
    <location>
        <begin position="1"/>
        <end position="449"/>
    </location>
</feature>
<feature type="transmembrane region" description="Helical" evidence="2">
    <location>
        <begin position="8"/>
        <end position="28"/>
    </location>
</feature>
<feature type="transmembrane region" description="Helical" evidence="2">
    <location>
        <begin position="53"/>
        <end position="73"/>
    </location>
</feature>
<feature type="transmembrane region" description="Helical" evidence="2">
    <location>
        <begin position="74"/>
        <end position="94"/>
    </location>
</feature>
<feature type="transmembrane region" description="Helical" evidence="2">
    <location>
        <begin position="96"/>
        <end position="116"/>
    </location>
</feature>
<feature type="transmembrane region" description="Helical" evidence="2">
    <location>
        <begin position="138"/>
        <end position="158"/>
    </location>
</feature>
<feature type="transmembrane region" description="Helical" evidence="2">
    <location>
        <begin position="170"/>
        <end position="190"/>
    </location>
</feature>
<feature type="transmembrane region" description="Helical" evidence="2">
    <location>
        <begin position="239"/>
        <end position="259"/>
    </location>
</feature>
<feature type="transmembrane region" description="Helical" evidence="2">
    <location>
        <begin position="277"/>
        <end position="297"/>
    </location>
</feature>
<feature type="transmembrane region" description="Helical" evidence="2">
    <location>
        <begin position="309"/>
        <end position="329"/>
    </location>
</feature>
<feature type="transmembrane region" description="Helical" evidence="2">
    <location>
        <begin position="359"/>
        <end position="379"/>
    </location>
</feature>
<feature type="transmembrane region" description="Helical" evidence="2">
    <location>
        <begin position="385"/>
        <end position="405"/>
    </location>
</feature>
<feature type="transmembrane region" description="Helical" evidence="2">
    <location>
        <begin position="410"/>
        <end position="430"/>
    </location>
</feature>
<feature type="modified residue" description="Phosphoserine" evidence="1">
    <location>
        <position position="204"/>
    </location>
</feature>
<feature type="glycosylation site" description="N-linked (GlcNAc...) asparagine" evidence="2">
    <location>
        <position position="40"/>
    </location>
</feature>
<feature type="splice variant" id="VSP_028190" description="In isoform 2." evidence="3">
    <location>
        <begin position="1"/>
        <end position="209"/>
    </location>
</feature>
<proteinExistence type="evidence at transcript level"/>
<reference key="1">
    <citation type="submission" date="2004-11" db="EMBL/GenBank/DDBJ databases">
        <authorList>
            <consortium name="The German cDNA consortium"/>
        </authorList>
    </citation>
    <scope>NUCLEOTIDE SEQUENCE [LARGE SCALE MRNA] (ISOFORMS 1 AND 2)</scope>
    <source>
        <tissue>Heart</tissue>
        <tissue>Kidney</tissue>
    </source>
</reference>
<protein>
    <recommendedName>
        <fullName>UNC93-like protein MFSD11</fullName>
    </recommendedName>
    <alternativeName>
        <fullName>Major facilitator superfamily domain-containing protein 11</fullName>
    </alternativeName>
</protein>